<gene>
    <name evidence="5 9" type="primary">gpm2</name>
    <name evidence="9" type="ordered locus">Rv3214</name>
</gene>
<name>SUGPH_MYCTU</name>
<protein>
    <recommendedName>
        <fullName evidence="4">Acid phosphatase</fullName>
        <ecNumber evidence="2">3.1.3.2</ecNumber>
    </recommendedName>
    <alternativeName>
        <fullName evidence="4">Broad-specificity phosphatase</fullName>
    </alternativeName>
    <alternativeName>
        <fullName evidence="5">Fructose-1,6-bisphosphatase</fullName>
        <shortName evidence="5">FBPase</shortName>
        <ecNumber evidence="3">3.1.3.11</ecNumber>
    </alternativeName>
</protein>
<accession>Q6MWZ7</accession>
<accession>I6YFI9</accession>
<proteinExistence type="evidence at protein level"/>
<dbReference type="EC" id="3.1.3.2" evidence="2"/>
<dbReference type="EC" id="3.1.3.11" evidence="3"/>
<dbReference type="EMBL" id="AL123456">
    <property type="protein sequence ID" value="CCP46030.1"/>
    <property type="molecule type" value="Genomic_DNA"/>
</dbReference>
<dbReference type="RefSeq" id="WP_003416878.1">
    <property type="nucleotide sequence ID" value="NZ_NVQJ01000003.1"/>
</dbReference>
<dbReference type="RefSeq" id="YP_177944.1">
    <property type="nucleotide sequence ID" value="NC_000962.3"/>
</dbReference>
<dbReference type="PDB" id="2A6P">
    <property type="method" value="X-ray"/>
    <property type="resolution" value="2.20 A"/>
    <property type="chains" value="A/B=1-203"/>
</dbReference>
<dbReference type="PDBsum" id="2A6P"/>
<dbReference type="SMR" id="Q6MWZ7"/>
<dbReference type="FunCoup" id="Q6MWZ7">
    <property type="interactions" value="9"/>
</dbReference>
<dbReference type="STRING" id="83332.Rv3214"/>
<dbReference type="PaxDb" id="83332-Rv3214"/>
<dbReference type="DNASU" id="888830"/>
<dbReference type="GeneID" id="888830"/>
<dbReference type="KEGG" id="mtu:Rv3214"/>
<dbReference type="KEGG" id="mtv:RVBD_3214"/>
<dbReference type="PATRIC" id="fig|83332.111.peg.3589"/>
<dbReference type="TubercuList" id="Rv3214"/>
<dbReference type="eggNOG" id="COG0406">
    <property type="taxonomic scope" value="Bacteria"/>
</dbReference>
<dbReference type="HOGENOM" id="CLU_033323_13_1_11"/>
<dbReference type="InParanoid" id="Q6MWZ7"/>
<dbReference type="OrthoDB" id="4697614at2"/>
<dbReference type="PhylomeDB" id="Q6MWZ7"/>
<dbReference type="UniPathway" id="UPA00138"/>
<dbReference type="Proteomes" id="UP000001584">
    <property type="component" value="Chromosome"/>
</dbReference>
<dbReference type="GO" id="GO:0003993">
    <property type="term" value="F:acid phosphatase activity"/>
    <property type="evidence" value="ECO:0000314"/>
    <property type="project" value="MTBBASE"/>
</dbReference>
<dbReference type="GO" id="GO:0042132">
    <property type="term" value="F:fructose 1,6-bisphosphate 1-phosphatase activity"/>
    <property type="evidence" value="ECO:0007669"/>
    <property type="project" value="UniProtKB-EC"/>
</dbReference>
<dbReference type="GO" id="GO:0101006">
    <property type="term" value="F:protein histidine phosphatase activity"/>
    <property type="evidence" value="ECO:0000318"/>
    <property type="project" value="GO_Central"/>
</dbReference>
<dbReference type="GO" id="GO:0042803">
    <property type="term" value="F:protein homodimerization activity"/>
    <property type="evidence" value="ECO:0000353"/>
    <property type="project" value="MTBBASE"/>
</dbReference>
<dbReference type="GO" id="GO:0006094">
    <property type="term" value="P:gluconeogenesis"/>
    <property type="evidence" value="ECO:0007669"/>
    <property type="project" value="UniProtKB-UniPathway"/>
</dbReference>
<dbReference type="GO" id="GO:0070297">
    <property type="term" value="P:regulation of phosphorelay signal transduction system"/>
    <property type="evidence" value="ECO:0000318"/>
    <property type="project" value="GO_Central"/>
</dbReference>
<dbReference type="CDD" id="cd07067">
    <property type="entry name" value="HP_PGM_like"/>
    <property type="match status" value="1"/>
</dbReference>
<dbReference type="FunFam" id="3.40.50.1240:FF:000069">
    <property type="entry name" value="Possible phosphoglycerate mutase gpm2"/>
    <property type="match status" value="1"/>
</dbReference>
<dbReference type="Gene3D" id="3.40.50.1240">
    <property type="entry name" value="Phosphoglycerate mutase-like"/>
    <property type="match status" value="1"/>
</dbReference>
<dbReference type="InterPro" id="IPR013078">
    <property type="entry name" value="His_Pase_superF_clade-1"/>
</dbReference>
<dbReference type="InterPro" id="IPR029033">
    <property type="entry name" value="His_PPase_superfam"/>
</dbReference>
<dbReference type="InterPro" id="IPR050275">
    <property type="entry name" value="PGM_Phosphatase"/>
</dbReference>
<dbReference type="NCBIfam" id="NF009993">
    <property type="entry name" value="PRK13462.1"/>
    <property type="match status" value="1"/>
</dbReference>
<dbReference type="PANTHER" id="PTHR48100">
    <property type="entry name" value="BROAD-SPECIFICITY PHOSPHATASE YOR283W-RELATED"/>
    <property type="match status" value="1"/>
</dbReference>
<dbReference type="PANTHER" id="PTHR48100:SF15">
    <property type="entry name" value="SEDOHEPTULOSE 1,7-BISPHOSPHATASE"/>
    <property type="match status" value="1"/>
</dbReference>
<dbReference type="Pfam" id="PF00300">
    <property type="entry name" value="His_Phos_1"/>
    <property type="match status" value="1"/>
</dbReference>
<dbReference type="PIRSF" id="PIRSF000709">
    <property type="entry name" value="6PFK_2-Ptase"/>
    <property type="match status" value="1"/>
</dbReference>
<dbReference type="SMART" id="SM00855">
    <property type="entry name" value="PGAM"/>
    <property type="match status" value="1"/>
</dbReference>
<dbReference type="SUPFAM" id="SSF53254">
    <property type="entry name" value="Phosphoglycerate mutase-like"/>
    <property type="match status" value="1"/>
</dbReference>
<evidence type="ECO:0000250" key="1">
    <source>
        <dbReference type="UniProtKB" id="P36136"/>
    </source>
</evidence>
<evidence type="ECO:0000269" key="2">
    <source>
    </source>
</evidence>
<evidence type="ECO:0000269" key="3">
    <source>
    </source>
</evidence>
<evidence type="ECO:0000303" key="4">
    <source>
    </source>
</evidence>
<evidence type="ECO:0000303" key="5">
    <source>
    </source>
</evidence>
<evidence type="ECO:0000305" key="6"/>
<evidence type="ECO:0000305" key="7">
    <source>
    </source>
</evidence>
<evidence type="ECO:0000305" key="8">
    <source>
    </source>
</evidence>
<evidence type="ECO:0000312" key="9">
    <source>
        <dbReference type="EMBL" id="CCP46030.1"/>
    </source>
</evidence>
<sequence length="203" mass="21949">MGVRNHRLLLLRHGETAWSTLGRHTGGTEVELTDTGRTQAELAGQLLGELELDDPIVICSPRRRTLDTAKLAGLTVNEVTGLLAEWDYGSYEGLTTPQIRESEPDWLVWTHGCPAGESVAQVNDRADSAVALALEHMSSRDVLFVSHGHFSRAVITRWVQLPLAEGSRFAMPTASIGICGFEHGVRQLAVLGLTGHPQPIAAG</sequence>
<comment type="function">
    <text evidence="2 3">Phosphatase with a broad specificity. Can dephosphorylate a variety of substrates including phosphorylated sugars like fructose-6-phosphate (F6P) (PubMed:16672613). Is able to function in vivo as a fructose-1,6-bisphosphatase (FBPase) and to maintain gluconeogenesis when the classical FBPase GlpX is absent (PubMed:26258286). Shows negligible phosphoglycerate mutase activity (PubMed:16672613). Has no phosphatase activity against 3-phosphoglycerate, 2,3-bisphosphoglycerate, or hydrophobic substrates such as alpha-napthyl phosphate (PubMed:16672613).</text>
</comment>
<comment type="catalytic activity">
    <reaction evidence="2">
        <text>a phosphate monoester + H2O = an alcohol + phosphate</text>
        <dbReference type="Rhea" id="RHEA:15017"/>
        <dbReference type="ChEBI" id="CHEBI:15377"/>
        <dbReference type="ChEBI" id="CHEBI:30879"/>
        <dbReference type="ChEBI" id="CHEBI:43474"/>
        <dbReference type="ChEBI" id="CHEBI:67140"/>
        <dbReference type="EC" id="3.1.3.2"/>
    </reaction>
</comment>
<comment type="catalytic activity">
    <reaction evidence="3">
        <text>beta-D-fructose 1,6-bisphosphate + H2O = beta-D-fructose 6-phosphate + phosphate</text>
        <dbReference type="Rhea" id="RHEA:11064"/>
        <dbReference type="ChEBI" id="CHEBI:15377"/>
        <dbReference type="ChEBI" id="CHEBI:32966"/>
        <dbReference type="ChEBI" id="CHEBI:43474"/>
        <dbReference type="ChEBI" id="CHEBI:57634"/>
        <dbReference type="EC" id="3.1.3.11"/>
    </reaction>
</comment>
<comment type="activity regulation">
    <text evidence="3">In contrast to classical FBPases, is resistant to inhibition by lithium.</text>
</comment>
<comment type="biophysicochemical properties">
    <kinetics>
        <KM evidence="2">0.04 mM for p-nitrophenyl phosphate (at pH 5.5 and 37 degrees Celsius)</KM>
        <KM evidence="2">101.1 uM for 3-phosphoglycerate</KM>
        <text evidence="2 3">kcat is 0.00071 sec(-1) for phosphoglycerate mutase activity (PubMed:16672613). The enzyme's FBPase activity does not follow Michaelis-Menten kinetics but follows allosteric sigmoidal kinetics that show lower affinity for FBP compared with GlpX, but the enzyme's higher turnover number makes it a robust FBPase at high FBP concentrations (PubMed:26258286).</text>
    </kinetics>
    <phDependence>
        <text evidence="2">Optimum pH is 5.4 for phosphatase activity using pNPP as the substrate.</text>
    </phDependence>
</comment>
<comment type="pathway">
    <text evidence="8">Carbohydrate biosynthesis; gluconeogenesis.</text>
</comment>
<comment type="subunit">
    <text evidence="2">Homodimer.</text>
</comment>
<comment type="disruption phenotype">
    <text evidence="3">Cells lacking both glpX and gpm2 grow as well as wild-type on glucose, but are unable to grow on any of the gluconeogenic carbon sources tested (glycerol, acetate and butyrate); the growth defect on gluconeogenic carbon sources is fully complemented by restoring expression of either GlpX or Gpm2. This double mutant lacks detectable FBPase activity and accumulates FBP. It is also severely attenuated in a mouse model of infection, as it fails to replicate in mouse lungs during the first 10 days of infection and begins to die thereafter.</text>
</comment>
<comment type="miscellaneous">
    <text evidence="3">Gluconeogenesis is critical to M.tuberculosis ability to establish infection and is necessary for its survival in the host.</text>
</comment>
<comment type="similarity">
    <text evidence="6">Belongs to the phosphoglycerate mutase family.</text>
</comment>
<reference key="1">
    <citation type="journal article" date="1998" name="Nature">
        <title>Deciphering the biology of Mycobacterium tuberculosis from the complete genome sequence.</title>
        <authorList>
            <person name="Cole S.T."/>
            <person name="Brosch R."/>
            <person name="Parkhill J."/>
            <person name="Garnier T."/>
            <person name="Churcher C.M."/>
            <person name="Harris D.E."/>
            <person name="Gordon S.V."/>
            <person name="Eiglmeier K."/>
            <person name="Gas S."/>
            <person name="Barry C.E. III"/>
            <person name="Tekaia F."/>
            <person name="Badcock K."/>
            <person name="Basham D."/>
            <person name="Brown D."/>
            <person name="Chillingworth T."/>
            <person name="Connor R."/>
            <person name="Davies R.M."/>
            <person name="Devlin K."/>
            <person name="Feltwell T."/>
            <person name="Gentles S."/>
            <person name="Hamlin N."/>
            <person name="Holroyd S."/>
            <person name="Hornsby T."/>
            <person name="Jagels K."/>
            <person name="Krogh A."/>
            <person name="McLean J."/>
            <person name="Moule S."/>
            <person name="Murphy L.D."/>
            <person name="Oliver S."/>
            <person name="Osborne J."/>
            <person name="Quail M.A."/>
            <person name="Rajandream M.A."/>
            <person name="Rogers J."/>
            <person name="Rutter S."/>
            <person name="Seeger K."/>
            <person name="Skelton S."/>
            <person name="Squares S."/>
            <person name="Squares R."/>
            <person name="Sulston J.E."/>
            <person name="Taylor K."/>
            <person name="Whitehead S."/>
            <person name="Barrell B.G."/>
        </authorList>
    </citation>
    <scope>NUCLEOTIDE SEQUENCE [LARGE SCALE GENOMIC DNA]</scope>
    <source>
        <strain>ATCC 25618 / H37Rv</strain>
    </source>
</reference>
<reference key="2">
    <citation type="journal article" date="2011" name="Mol. Cell. Proteomics">
        <title>Proteogenomic analysis of Mycobacterium tuberculosis by high resolution mass spectrometry.</title>
        <authorList>
            <person name="Kelkar D.S."/>
            <person name="Kumar D."/>
            <person name="Kumar P."/>
            <person name="Balakrishnan L."/>
            <person name="Muthusamy B."/>
            <person name="Yadav A.K."/>
            <person name="Shrivastava P."/>
            <person name="Marimuthu A."/>
            <person name="Anand S."/>
            <person name="Sundaram H."/>
            <person name="Kingsbury R."/>
            <person name="Harsha H.C."/>
            <person name="Nair B."/>
            <person name="Prasad T.S."/>
            <person name="Chauhan D.S."/>
            <person name="Katoch K."/>
            <person name="Katoch V.M."/>
            <person name="Kumar P."/>
            <person name="Chaerkady R."/>
            <person name="Ramachandran S."/>
            <person name="Dash D."/>
            <person name="Pandey A."/>
        </authorList>
    </citation>
    <scope>IDENTIFICATION BY MASS SPECTROMETRY [LARGE SCALE ANALYSIS]</scope>
    <source>
        <strain>ATCC 25618 / H37Rv</strain>
    </source>
</reference>
<reference key="3">
    <citation type="journal article" date="2015" name="Nat. Commun.">
        <title>Two enzymes with redundant fructose bisphosphatase activity sustain gluconeogenesis and virulence in Mycobacterium tuberculosis.</title>
        <authorList>
            <person name="Ganapathy U."/>
            <person name="Marrero J."/>
            <person name="Calhoun S."/>
            <person name="Eoh H."/>
            <person name="de Carvalho L.P."/>
            <person name="Rhee K."/>
            <person name="Ehrt S."/>
        </authorList>
    </citation>
    <scope>IDENTIFICATION BY MASS SPECTROMETRY</scope>
    <scope>FUNCTION AS A FBPASE</scope>
    <scope>CATALYTIC ACTIVITY</scope>
    <scope>BIOPHYSICOCHEMICAL PROPERTIES</scope>
    <scope>ACTIVITY REGULATION</scope>
    <scope>DISRUPTION PHENOTYPE</scope>
    <scope>PATHWAY</scope>
    <source>
        <strain>H37Rv</strain>
    </source>
</reference>
<reference key="4">
    <citation type="journal article" date="2006" name="J. Bacteriol.">
        <title>Structural and functional analysis of Rv3214 from Mycobacterium tuberculosis, a protein with conflicting functional annotations, leads to its characterization as a phosphatase.</title>
        <authorList>
            <person name="Watkins H.A."/>
            <person name="Baker E.N."/>
        </authorList>
    </citation>
    <scope>X-RAY CRYSTALLOGRAPHY (2.20 ANGSTROMS)</scope>
    <scope>FUNCTION AS A BROAD-SPECTRUM PHOSPHATASE</scope>
    <scope>CATALYTIC ACTIVITY</scope>
    <scope>BIOPHYSICOCHEMICAL PROPERTIES</scope>
    <scope>SUBSTRATE SPECIFICITY</scope>
    <scope>SUBUNIT</scope>
    <source>
        <strain>H37Rv</strain>
    </source>
</reference>
<organism>
    <name type="scientific">Mycobacterium tuberculosis (strain ATCC 25618 / H37Rv)</name>
    <dbReference type="NCBI Taxonomy" id="83332"/>
    <lineage>
        <taxon>Bacteria</taxon>
        <taxon>Bacillati</taxon>
        <taxon>Actinomycetota</taxon>
        <taxon>Actinomycetes</taxon>
        <taxon>Mycobacteriales</taxon>
        <taxon>Mycobacteriaceae</taxon>
        <taxon>Mycobacterium</taxon>
        <taxon>Mycobacterium tuberculosis complex</taxon>
    </lineage>
</organism>
<feature type="chain" id="PRO_0000437244" description="Acid phosphatase">
    <location>
        <begin position="1"/>
        <end position="203"/>
    </location>
</feature>
<feature type="active site" description="Tele-phosphohistidine intermediate" evidence="1 7">
    <location>
        <position position="13"/>
    </location>
</feature>
<feature type="active site" description="Proton donor/acceptor" evidence="1">
    <location>
        <position position="85"/>
    </location>
</feature>
<feature type="site" description="Transition state stabilizer" evidence="1">
    <location>
        <position position="147"/>
    </location>
</feature>
<keyword id="KW-0002">3D-structure</keyword>
<keyword id="KW-0119">Carbohydrate metabolism</keyword>
<keyword id="KW-0312">Gluconeogenesis</keyword>
<keyword id="KW-0378">Hydrolase</keyword>
<keyword id="KW-1185">Reference proteome</keyword>